<organism>
    <name type="scientific">Azospirillum brasilense</name>
    <dbReference type="NCBI Taxonomy" id="192"/>
    <lineage>
        <taxon>Bacteria</taxon>
        <taxon>Pseudomonadati</taxon>
        <taxon>Pseudomonadota</taxon>
        <taxon>Alphaproteobacteria</taxon>
        <taxon>Rhodospirillales</taxon>
        <taxon>Azospirillaceae</taxon>
        <taxon>Azospirillum</taxon>
    </lineage>
</organism>
<proteinExistence type="inferred from homology"/>
<sequence length="631" mass="67101">MARPASPRSGSGKSAGARPAGARTEKPPFFSPATRAFVVARAREMAGFALGVVGLVLMVILGSYNPADPSWNAVPAADVHIHNLFGRFGAHLADVLIQSLGWAAYLLALVPMMWGWRLSLQKSVRHPLFRSVLAVWGVLMVAMFLAGMGTGSEDPLKSRPGGSFGGLLLDGVSRLLFGSPGNPLVGTVAGVAGGLILFVAMGLSIREWAASLRETAAGLARLGRGARTGLSFVRDKGAEAARSAARQTGGLLRREPSLATAEKTTAAPTLDDTPDEDGGAITLRAAPRGRLSDSISVEPRVEAKTRAVPVVTSPAGGKTKAADQGRPSKQAALNLEEADGYELPPLDLLQIVPTSVRGEKVDEAALRENAVKLEGVLSDFGVRGEVQKVHPGPVVTLYELEPAPGTKSSRVIGLADDIARSMSAVSVRVAVVPGRNVIGIELPNAKRETVLLRELLAGDVFDKTAGKLLLALGKDIGGQSVVADLARFPHLLVAGTTGSGKSVAINTMILSLLYRLPPDRCRFIMIDPKMLELSVYEGIPHLLTPVVTDPKKAVVALKWTVREMEDRYRNMSKLGVRNIEGYNARLREARADGELLTRRVQTGFDPDTGKPIFEEQPLDLKELPYIVVIVD</sequence>
<keyword id="KW-0067">ATP-binding</keyword>
<keyword id="KW-0131">Cell cycle</keyword>
<keyword id="KW-0132">Cell division</keyword>
<keyword id="KW-0997">Cell inner membrane</keyword>
<keyword id="KW-1003">Cell membrane</keyword>
<keyword id="KW-0159">Chromosome partition</keyword>
<keyword id="KW-0238">DNA-binding</keyword>
<keyword id="KW-0472">Membrane</keyword>
<keyword id="KW-0547">Nucleotide-binding</keyword>
<keyword id="KW-0812">Transmembrane</keyword>
<keyword id="KW-1133">Transmembrane helix</keyword>
<gene>
    <name type="primary">ftsK</name>
</gene>
<reference key="1">
    <citation type="journal article" date="1998" name="Mol. Microbiol.">
        <title>Structural homologues PII and PZ of Azospirillum brasilense provide intracellular signalling for selective regulation of various nitrogen-dependent functions.</title>
        <authorList>
            <person name="de Zamaroczy M."/>
        </authorList>
    </citation>
    <scope>NUCLEOTIDE SEQUENCE [GENOMIC DNA]</scope>
    <source>
        <strain>ATCC 29145 / DSM 1690 / IMET 11303 / Sp7</strain>
    </source>
</reference>
<dbReference type="EMBL" id="X92496">
    <property type="protein sequence ID" value="CAA63241.1"/>
    <property type="molecule type" value="Genomic_DNA"/>
</dbReference>
<dbReference type="SMR" id="O83045"/>
<dbReference type="GO" id="GO:0005886">
    <property type="term" value="C:plasma membrane"/>
    <property type="evidence" value="ECO:0007669"/>
    <property type="project" value="UniProtKB-SubCell"/>
</dbReference>
<dbReference type="GO" id="GO:0005524">
    <property type="term" value="F:ATP binding"/>
    <property type="evidence" value="ECO:0007669"/>
    <property type="project" value="UniProtKB-KW"/>
</dbReference>
<dbReference type="GO" id="GO:0003677">
    <property type="term" value="F:DNA binding"/>
    <property type="evidence" value="ECO:0007669"/>
    <property type="project" value="UniProtKB-KW"/>
</dbReference>
<dbReference type="GO" id="GO:0051301">
    <property type="term" value="P:cell division"/>
    <property type="evidence" value="ECO:0007669"/>
    <property type="project" value="UniProtKB-KW"/>
</dbReference>
<dbReference type="GO" id="GO:0007059">
    <property type="term" value="P:chromosome segregation"/>
    <property type="evidence" value="ECO:0007669"/>
    <property type="project" value="UniProtKB-KW"/>
</dbReference>
<dbReference type="Gene3D" id="3.30.980.40">
    <property type="match status" value="1"/>
</dbReference>
<dbReference type="Gene3D" id="3.40.50.300">
    <property type="entry name" value="P-loop containing nucleotide triphosphate hydrolases"/>
    <property type="match status" value="1"/>
</dbReference>
<dbReference type="InterPro" id="IPR050206">
    <property type="entry name" value="FtsK/SpoIIIE/SftA"/>
</dbReference>
<dbReference type="InterPro" id="IPR025199">
    <property type="entry name" value="FtsK_4TM"/>
</dbReference>
<dbReference type="InterPro" id="IPR041027">
    <property type="entry name" value="FtsK_alpha"/>
</dbReference>
<dbReference type="InterPro" id="IPR002543">
    <property type="entry name" value="FtsK_dom"/>
</dbReference>
<dbReference type="InterPro" id="IPR027417">
    <property type="entry name" value="P-loop_NTPase"/>
</dbReference>
<dbReference type="PANTHER" id="PTHR22683:SF41">
    <property type="entry name" value="DNA TRANSLOCASE FTSK"/>
    <property type="match status" value="1"/>
</dbReference>
<dbReference type="PANTHER" id="PTHR22683">
    <property type="entry name" value="SPORULATION PROTEIN RELATED"/>
    <property type="match status" value="1"/>
</dbReference>
<dbReference type="Pfam" id="PF13491">
    <property type="entry name" value="FtsK_4TM"/>
    <property type="match status" value="1"/>
</dbReference>
<dbReference type="Pfam" id="PF17854">
    <property type="entry name" value="FtsK_alpha"/>
    <property type="match status" value="1"/>
</dbReference>
<dbReference type="Pfam" id="PF01580">
    <property type="entry name" value="FtsK_SpoIIIE"/>
    <property type="match status" value="1"/>
</dbReference>
<dbReference type="SUPFAM" id="SSF52540">
    <property type="entry name" value="P-loop containing nucleoside triphosphate hydrolases"/>
    <property type="match status" value="1"/>
</dbReference>
<dbReference type="PROSITE" id="PS50901">
    <property type="entry name" value="FTSK"/>
    <property type="match status" value="1"/>
</dbReference>
<feature type="chain" id="PRO_0000098235" description="DNA translocase FtsK">
    <location>
        <begin position="1"/>
        <end position="631" status="greater than"/>
    </location>
</feature>
<feature type="transmembrane region" description="Helical" evidence="2">
    <location>
        <begin position="44"/>
        <end position="64"/>
    </location>
</feature>
<feature type="transmembrane region" description="Helical" evidence="2">
    <location>
        <begin position="95"/>
        <end position="115"/>
    </location>
</feature>
<feature type="transmembrane region" description="Helical" evidence="2">
    <location>
        <begin position="131"/>
        <end position="151"/>
    </location>
</feature>
<feature type="transmembrane region" description="Helical" evidence="2">
    <location>
        <begin position="185"/>
        <end position="205"/>
    </location>
</feature>
<feature type="topological domain" description="Cytoplasmic" evidence="2">
    <location>
        <begin position="206"/>
        <end position="631" status="greater than"/>
    </location>
</feature>
<feature type="domain" description="FtsK" evidence="3">
    <location>
        <begin position="478"/>
        <end position="631" status="greater than"/>
    </location>
</feature>
<feature type="region of interest" description="Disordered" evidence="4">
    <location>
        <begin position="1"/>
        <end position="27"/>
    </location>
</feature>
<feature type="region of interest" description="Disordered" evidence="4">
    <location>
        <begin position="243"/>
        <end position="277"/>
    </location>
</feature>
<feature type="binding site" evidence="3">
    <location>
        <begin position="498"/>
        <end position="503"/>
    </location>
    <ligand>
        <name>ATP</name>
        <dbReference type="ChEBI" id="CHEBI:30616"/>
    </ligand>
</feature>
<feature type="non-terminal residue">
    <location>
        <position position="631"/>
    </location>
</feature>
<comment type="function">
    <text evidence="1">Essential cell division protein that coordinates cell division and chromosome segregation. The N-terminus is involved in assembly of the cell-division machinery. The C-terminus functions as a DNA motor that moves dsDNA in an ATP-dependent manner towards the dif recombination site, which is located within the replication terminus region. Translocation stops specifically at Xer-dif sites, where FtsK interacts with the Xer recombinase, allowing activation of chromosome unlinking by recombination. FtsK orienting polar sequences (KOPS) guide the direction of DNA translocation. FtsK can remove proteins from DNA as it translocates, but translocation stops specifically at XerCD-dif site, thereby preventing removal of XerC and XerD from dif (By similarity).</text>
</comment>
<comment type="subunit">
    <text evidence="1">Homohexamer. Forms a ring that surrounds DNA (By similarity).</text>
</comment>
<comment type="subcellular location">
    <subcellularLocation>
        <location evidence="1">Cell inner membrane</location>
        <topology evidence="1">Multi-pass membrane protein</topology>
    </subcellularLocation>
    <text evidence="1">Located at the septum.</text>
</comment>
<comment type="domain">
    <text evidence="1">Consists of an N-terminal domain, which is sufficient for the localization to the septal ring and is required for cell division, followed by a linker domain, and a C-terminal domain, which forms the translocation motor involved in chromosome segregation. The C-terminal domain can be further subdivided into alpha, beta and gamma subdomains. The alpha and beta subdomains multimerise to produce a hexameric ring, contain the nucleotide binding motif and form the DNA pump. The gamma subdomain is a regulatory subdomain that controls translocation of DNA by recognition of KOPS motifs and interacts with XerD recombinase (By similarity).</text>
</comment>
<comment type="similarity">
    <text evidence="5">Belongs to the FtsK/SpoIIIE/SftA family.</text>
</comment>
<accession>O83045</accession>
<name>FTSK_AZOBR</name>
<protein>
    <recommendedName>
        <fullName>DNA translocase FtsK</fullName>
    </recommendedName>
</protein>
<evidence type="ECO:0000250" key="1"/>
<evidence type="ECO:0000255" key="2"/>
<evidence type="ECO:0000255" key="3">
    <source>
        <dbReference type="PROSITE-ProRule" id="PRU00289"/>
    </source>
</evidence>
<evidence type="ECO:0000256" key="4">
    <source>
        <dbReference type="SAM" id="MobiDB-lite"/>
    </source>
</evidence>
<evidence type="ECO:0000305" key="5"/>